<name>HSP7D_RAT</name>
<sequence length="13" mass="1306">STAGDTHLGGEDF</sequence>
<accession>P84588</accession>
<keyword id="KW-0067">ATP-binding</keyword>
<keyword id="KW-0143">Chaperone</keyword>
<keyword id="KW-0903">Direct protein sequencing</keyword>
<keyword id="KW-0547">Nucleotide-binding</keyword>
<keyword id="KW-0539">Nucleus</keyword>
<keyword id="KW-1185">Reference proteome</keyword>
<keyword id="KW-0346">Stress response</keyword>
<protein>
    <recommendedName>
        <fullName>Heat shock cognate 71 kDa protein 2</fullName>
    </recommendedName>
</protein>
<evidence type="ECO:0000250" key="1">
    <source>
        <dbReference type="UniProtKB" id="P63018"/>
    </source>
</evidence>
<evidence type="ECO:0000255" key="2"/>
<evidence type="ECO:0000269" key="3">
    <source>
    </source>
</evidence>
<evidence type="ECO:0000303" key="4">
    <source>
    </source>
</evidence>
<comment type="function">
    <text evidence="1">Chaperone.</text>
</comment>
<comment type="subcellular location">
    <subcellularLocation>
        <location evidence="3">Nucleus matrix</location>
    </subcellularLocation>
</comment>
<comment type="similarity">
    <text evidence="2">Belongs to the heat shock protein 70 family.</text>
</comment>
<feature type="chain" id="PRO_0000078274" description="Heat shock cognate 71 kDa protein 2">
    <location>
        <begin position="1" status="less than"/>
        <end position="13" status="greater than"/>
    </location>
</feature>
<feature type="non-terminal residue" evidence="4">
    <location>
        <position position="1"/>
    </location>
</feature>
<feature type="non-terminal residue" evidence="4">
    <location>
        <position position="13"/>
    </location>
</feature>
<organism>
    <name type="scientific">Rattus norvegicus</name>
    <name type="common">Rat</name>
    <dbReference type="NCBI Taxonomy" id="10116"/>
    <lineage>
        <taxon>Eukaryota</taxon>
        <taxon>Metazoa</taxon>
        <taxon>Chordata</taxon>
        <taxon>Craniata</taxon>
        <taxon>Vertebrata</taxon>
        <taxon>Euteleostomi</taxon>
        <taxon>Mammalia</taxon>
        <taxon>Eutheria</taxon>
        <taxon>Euarchontoglires</taxon>
        <taxon>Glires</taxon>
        <taxon>Rodentia</taxon>
        <taxon>Myomorpha</taxon>
        <taxon>Muroidea</taxon>
        <taxon>Muridae</taxon>
        <taxon>Murinae</taxon>
        <taxon>Rattus</taxon>
    </lineage>
</organism>
<reference key="1">
    <citation type="journal article" date="2005" name="FEBS J.">
        <title>Proteome analysis of a rat liver nuclear insoluble protein fraction and localization of a novel protein, ISP36, to compartments in the interchromatin space.</title>
        <authorList>
            <person name="Segawa M."/>
            <person name="Niino K."/>
            <person name="Mineki R."/>
            <person name="Kaga N."/>
            <person name="Murayama K."/>
            <person name="Sugimoto K."/>
            <person name="Watanabe Y."/>
            <person name="Furukawa K."/>
            <person name="Horigome T."/>
        </authorList>
    </citation>
    <scope>PROTEIN SEQUENCE</scope>
    <scope>SUBCELLULAR LOCATION</scope>
    <source>
        <tissue>Liver</tissue>
    </source>
</reference>
<proteinExistence type="evidence at protein level"/>
<dbReference type="PeptideAtlas" id="P84588"/>
<dbReference type="InParanoid" id="P84588"/>
<dbReference type="Proteomes" id="UP000002494">
    <property type="component" value="Unplaced"/>
</dbReference>
<dbReference type="GO" id="GO:0016363">
    <property type="term" value="C:nuclear matrix"/>
    <property type="evidence" value="ECO:0007669"/>
    <property type="project" value="UniProtKB-SubCell"/>
</dbReference>
<dbReference type="GO" id="GO:0005524">
    <property type="term" value="F:ATP binding"/>
    <property type="evidence" value="ECO:0007669"/>
    <property type="project" value="UniProtKB-KW"/>
</dbReference>